<comment type="function">
    <text evidence="1">Catalyzes the condensation of carbamoyl phosphate and aspartate to form carbamoyl aspartate and inorganic phosphate, the committed step in the de novo pyrimidine nucleotide biosynthesis pathway.</text>
</comment>
<comment type="catalytic activity">
    <reaction evidence="1">
        <text>carbamoyl phosphate + L-aspartate = N-carbamoyl-L-aspartate + phosphate + H(+)</text>
        <dbReference type="Rhea" id="RHEA:20013"/>
        <dbReference type="ChEBI" id="CHEBI:15378"/>
        <dbReference type="ChEBI" id="CHEBI:29991"/>
        <dbReference type="ChEBI" id="CHEBI:32814"/>
        <dbReference type="ChEBI" id="CHEBI:43474"/>
        <dbReference type="ChEBI" id="CHEBI:58228"/>
        <dbReference type="EC" id="2.1.3.2"/>
    </reaction>
</comment>
<comment type="pathway">
    <text evidence="1">Pyrimidine metabolism; UMP biosynthesis via de novo pathway; (S)-dihydroorotate from bicarbonate: step 2/3.</text>
</comment>
<comment type="subunit">
    <text evidence="1">Heterododecamer (2C3:3R2) of six catalytic PyrB chains organized as two trimers (C3), and six regulatory PyrI chains organized as three dimers (R2).</text>
</comment>
<comment type="similarity">
    <text evidence="1">Belongs to the aspartate/ornithine carbamoyltransferase superfamily. ATCase family.</text>
</comment>
<keyword id="KW-0665">Pyrimidine biosynthesis</keyword>
<keyword id="KW-1185">Reference proteome</keyword>
<keyword id="KW-0808">Transferase</keyword>
<reference key="1">
    <citation type="journal article" date="2006" name="Proc. Natl. Acad. Sci. U.S.A.">
        <title>The complete genome sequence of Lactobacillus bulgaricus reveals extensive and ongoing reductive evolution.</title>
        <authorList>
            <person name="van de Guchte M."/>
            <person name="Penaud S."/>
            <person name="Grimaldi C."/>
            <person name="Barbe V."/>
            <person name="Bryson K."/>
            <person name="Nicolas P."/>
            <person name="Robert C."/>
            <person name="Oztas S."/>
            <person name="Mangenot S."/>
            <person name="Couloux A."/>
            <person name="Loux V."/>
            <person name="Dervyn R."/>
            <person name="Bossy R."/>
            <person name="Bolotin A."/>
            <person name="Batto J.-M."/>
            <person name="Walunas T."/>
            <person name="Gibrat J.-F."/>
            <person name="Bessieres P."/>
            <person name="Weissenbach J."/>
            <person name="Ehrlich S.D."/>
            <person name="Maguin E."/>
        </authorList>
    </citation>
    <scope>NUCLEOTIDE SEQUENCE [LARGE SCALE GENOMIC DNA]</scope>
    <source>
        <strain>ATCC 11842 / DSM 20081 / BCRC 10696 / JCM 1002 / NBRC 13953 / NCIMB 11778 / NCTC 12712 / WDCM 00102 / Lb 14</strain>
    </source>
</reference>
<sequence length="318" mass="36271">MKNLNLVALPHFVSVENLKNDEVKALIKRAEYFKKGGAVARLTSPVYVTNMFFEDSSRTHTSFEMAERKLGLTVIPFDPAHSSVNKGETLYDTSLVMNALGIDLEVIRHSQNEYYEDLINLKQHQKLNIGVINAGDGSGQHPSQCMLDMMTIHEHFGHFKGLKVAIVGDITNSRVAKSDMELLTKLGAEVYFSGPECWYSEEFDQYGKHEELDKLIPKMDVMMLLRVQHERHSGDPNEKKFDAHRYHEKYGINHKRYEAMKKDAIIMHPGPINHNVELSGDLVESDKCMFVRQMENGVFMRMAMLEAVLRGRKLGGLE</sequence>
<accession>Q1G866</accession>
<feature type="chain" id="PRO_0000301582" description="Aspartate carbamoyltransferase catalytic subunit">
    <location>
        <begin position="1"/>
        <end position="318"/>
    </location>
</feature>
<feature type="binding site" evidence="1">
    <location>
        <position position="58"/>
    </location>
    <ligand>
        <name>carbamoyl phosphate</name>
        <dbReference type="ChEBI" id="CHEBI:58228"/>
    </ligand>
</feature>
<feature type="binding site" evidence="1">
    <location>
        <position position="59"/>
    </location>
    <ligand>
        <name>carbamoyl phosphate</name>
        <dbReference type="ChEBI" id="CHEBI:58228"/>
    </ligand>
</feature>
<feature type="binding site" evidence="1">
    <location>
        <position position="86"/>
    </location>
    <ligand>
        <name>L-aspartate</name>
        <dbReference type="ChEBI" id="CHEBI:29991"/>
    </ligand>
</feature>
<feature type="binding site" evidence="1">
    <location>
        <position position="108"/>
    </location>
    <ligand>
        <name>carbamoyl phosphate</name>
        <dbReference type="ChEBI" id="CHEBI:58228"/>
    </ligand>
</feature>
<feature type="binding site" evidence="1">
    <location>
        <position position="141"/>
    </location>
    <ligand>
        <name>carbamoyl phosphate</name>
        <dbReference type="ChEBI" id="CHEBI:58228"/>
    </ligand>
</feature>
<feature type="binding site" evidence="1">
    <location>
        <position position="144"/>
    </location>
    <ligand>
        <name>carbamoyl phosphate</name>
        <dbReference type="ChEBI" id="CHEBI:58228"/>
    </ligand>
</feature>
<feature type="binding site" evidence="1">
    <location>
        <position position="174"/>
    </location>
    <ligand>
        <name>L-aspartate</name>
        <dbReference type="ChEBI" id="CHEBI:29991"/>
    </ligand>
</feature>
<feature type="binding site" evidence="1">
    <location>
        <position position="226"/>
    </location>
    <ligand>
        <name>L-aspartate</name>
        <dbReference type="ChEBI" id="CHEBI:29991"/>
    </ligand>
</feature>
<feature type="binding site" evidence="1">
    <location>
        <position position="270"/>
    </location>
    <ligand>
        <name>carbamoyl phosphate</name>
        <dbReference type="ChEBI" id="CHEBI:58228"/>
    </ligand>
</feature>
<feature type="binding site" evidence="1">
    <location>
        <position position="271"/>
    </location>
    <ligand>
        <name>carbamoyl phosphate</name>
        <dbReference type="ChEBI" id="CHEBI:58228"/>
    </ligand>
</feature>
<dbReference type="EC" id="2.1.3.2" evidence="1"/>
<dbReference type="EMBL" id="CR954253">
    <property type="protein sequence ID" value="CAI98850.1"/>
    <property type="molecule type" value="Genomic_DNA"/>
</dbReference>
<dbReference type="RefSeq" id="WP_011544328.1">
    <property type="nucleotide sequence ID" value="NC_008054.1"/>
</dbReference>
<dbReference type="SMR" id="Q1G866"/>
<dbReference type="STRING" id="390333.Ldb2112"/>
<dbReference type="KEGG" id="ldb:Ldb2112"/>
<dbReference type="PATRIC" id="fig|390333.13.peg.1146"/>
<dbReference type="eggNOG" id="COG0540">
    <property type="taxonomic scope" value="Bacteria"/>
</dbReference>
<dbReference type="HOGENOM" id="CLU_043846_2_1_9"/>
<dbReference type="BioCyc" id="LDEL390333:LDB_RS09200-MONOMER"/>
<dbReference type="UniPathway" id="UPA00070">
    <property type="reaction ID" value="UER00116"/>
</dbReference>
<dbReference type="Proteomes" id="UP000001259">
    <property type="component" value="Chromosome"/>
</dbReference>
<dbReference type="GO" id="GO:0005829">
    <property type="term" value="C:cytosol"/>
    <property type="evidence" value="ECO:0007669"/>
    <property type="project" value="TreeGrafter"/>
</dbReference>
<dbReference type="GO" id="GO:0016597">
    <property type="term" value="F:amino acid binding"/>
    <property type="evidence" value="ECO:0007669"/>
    <property type="project" value="InterPro"/>
</dbReference>
<dbReference type="GO" id="GO:0004070">
    <property type="term" value="F:aspartate carbamoyltransferase activity"/>
    <property type="evidence" value="ECO:0007669"/>
    <property type="project" value="UniProtKB-UniRule"/>
</dbReference>
<dbReference type="GO" id="GO:0006207">
    <property type="term" value="P:'de novo' pyrimidine nucleobase biosynthetic process"/>
    <property type="evidence" value="ECO:0007669"/>
    <property type="project" value="InterPro"/>
</dbReference>
<dbReference type="GO" id="GO:0044205">
    <property type="term" value="P:'de novo' UMP biosynthetic process"/>
    <property type="evidence" value="ECO:0007669"/>
    <property type="project" value="UniProtKB-UniRule"/>
</dbReference>
<dbReference type="GO" id="GO:0006520">
    <property type="term" value="P:amino acid metabolic process"/>
    <property type="evidence" value="ECO:0007669"/>
    <property type="project" value="InterPro"/>
</dbReference>
<dbReference type="FunFam" id="3.40.50.1370:FF:000011">
    <property type="entry name" value="Aspartate carbamoyltransferase"/>
    <property type="match status" value="1"/>
</dbReference>
<dbReference type="Gene3D" id="3.40.50.1370">
    <property type="entry name" value="Aspartate/ornithine carbamoyltransferase"/>
    <property type="match status" value="2"/>
</dbReference>
<dbReference type="HAMAP" id="MF_00001">
    <property type="entry name" value="Asp_carb_tr"/>
    <property type="match status" value="1"/>
</dbReference>
<dbReference type="InterPro" id="IPR006132">
    <property type="entry name" value="Asp/Orn_carbamoyltranf_P-bd"/>
</dbReference>
<dbReference type="InterPro" id="IPR006130">
    <property type="entry name" value="Asp/Orn_carbamoylTrfase"/>
</dbReference>
<dbReference type="InterPro" id="IPR036901">
    <property type="entry name" value="Asp/Orn_carbamoylTrfase_sf"/>
</dbReference>
<dbReference type="InterPro" id="IPR002082">
    <property type="entry name" value="Asp_carbamoyltransf"/>
</dbReference>
<dbReference type="InterPro" id="IPR006131">
    <property type="entry name" value="Asp_carbamoyltransf_Asp/Orn-bd"/>
</dbReference>
<dbReference type="NCBIfam" id="TIGR00670">
    <property type="entry name" value="asp_carb_tr"/>
    <property type="match status" value="1"/>
</dbReference>
<dbReference type="NCBIfam" id="NF002032">
    <property type="entry name" value="PRK00856.1"/>
    <property type="match status" value="1"/>
</dbReference>
<dbReference type="PANTHER" id="PTHR45753:SF6">
    <property type="entry name" value="ASPARTATE CARBAMOYLTRANSFERASE"/>
    <property type="match status" value="1"/>
</dbReference>
<dbReference type="PANTHER" id="PTHR45753">
    <property type="entry name" value="ORNITHINE CARBAMOYLTRANSFERASE, MITOCHONDRIAL"/>
    <property type="match status" value="1"/>
</dbReference>
<dbReference type="Pfam" id="PF00185">
    <property type="entry name" value="OTCace"/>
    <property type="match status" value="1"/>
</dbReference>
<dbReference type="Pfam" id="PF02729">
    <property type="entry name" value="OTCace_N"/>
    <property type="match status" value="1"/>
</dbReference>
<dbReference type="PRINTS" id="PR00100">
    <property type="entry name" value="AOTCASE"/>
</dbReference>
<dbReference type="PRINTS" id="PR00101">
    <property type="entry name" value="ATCASE"/>
</dbReference>
<dbReference type="SUPFAM" id="SSF53671">
    <property type="entry name" value="Aspartate/ornithine carbamoyltransferase"/>
    <property type="match status" value="1"/>
</dbReference>
<organism>
    <name type="scientific">Lactobacillus delbrueckii subsp. bulgaricus (strain ATCC 11842 / DSM 20081 / BCRC 10696 / JCM 1002 / NBRC 13953 / NCIMB 11778 / NCTC 12712 / WDCM 00102 / Lb 14)</name>
    <dbReference type="NCBI Taxonomy" id="390333"/>
    <lineage>
        <taxon>Bacteria</taxon>
        <taxon>Bacillati</taxon>
        <taxon>Bacillota</taxon>
        <taxon>Bacilli</taxon>
        <taxon>Lactobacillales</taxon>
        <taxon>Lactobacillaceae</taxon>
        <taxon>Lactobacillus</taxon>
    </lineage>
</organism>
<proteinExistence type="inferred from homology"/>
<protein>
    <recommendedName>
        <fullName evidence="1">Aspartate carbamoyltransferase catalytic subunit</fullName>
        <ecNumber evidence="1">2.1.3.2</ecNumber>
    </recommendedName>
    <alternativeName>
        <fullName evidence="1">Aspartate transcarbamylase</fullName>
        <shortName evidence="1">ATCase</shortName>
    </alternativeName>
</protein>
<gene>
    <name evidence="1" type="primary">pyrB</name>
    <name type="ordered locus">Ldb2112</name>
</gene>
<name>PYRB_LACDA</name>
<evidence type="ECO:0000255" key="1">
    <source>
        <dbReference type="HAMAP-Rule" id="MF_00001"/>
    </source>
</evidence>